<dbReference type="EMBL" id="AF022065">
    <property type="protein sequence ID" value="AAD13499.1"/>
    <property type="molecule type" value="Genomic_DNA"/>
</dbReference>
<dbReference type="EMBL" id="AF030264">
    <property type="protein sequence ID" value="AAB86411.1"/>
    <property type="molecule type" value="Genomic_DNA"/>
</dbReference>
<dbReference type="SMR" id="O20964"/>
<dbReference type="GO" id="GO:0005743">
    <property type="term" value="C:mitochondrial inner membrane"/>
    <property type="evidence" value="ECO:0007669"/>
    <property type="project" value="UniProtKB-SubCell"/>
</dbReference>
<dbReference type="GO" id="GO:0045275">
    <property type="term" value="C:respiratory chain complex III"/>
    <property type="evidence" value="ECO:0007669"/>
    <property type="project" value="InterPro"/>
</dbReference>
<dbReference type="GO" id="GO:0046872">
    <property type="term" value="F:metal ion binding"/>
    <property type="evidence" value="ECO:0007669"/>
    <property type="project" value="UniProtKB-KW"/>
</dbReference>
<dbReference type="GO" id="GO:0008121">
    <property type="term" value="F:ubiquinol-cytochrome-c reductase activity"/>
    <property type="evidence" value="ECO:0007669"/>
    <property type="project" value="InterPro"/>
</dbReference>
<dbReference type="GO" id="GO:0006122">
    <property type="term" value="P:mitochondrial electron transport, ubiquinol to cytochrome c"/>
    <property type="evidence" value="ECO:0007669"/>
    <property type="project" value="TreeGrafter"/>
</dbReference>
<dbReference type="CDD" id="cd00290">
    <property type="entry name" value="cytochrome_b_C"/>
    <property type="match status" value="1"/>
</dbReference>
<dbReference type="CDD" id="cd00284">
    <property type="entry name" value="Cytochrome_b_N"/>
    <property type="match status" value="1"/>
</dbReference>
<dbReference type="FunFam" id="1.20.810.10:FF:000002">
    <property type="entry name" value="Cytochrome b"/>
    <property type="match status" value="1"/>
</dbReference>
<dbReference type="Gene3D" id="1.20.810.10">
    <property type="entry name" value="Cytochrome Bc1 Complex, Chain C"/>
    <property type="match status" value="1"/>
</dbReference>
<dbReference type="InterPro" id="IPR005798">
    <property type="entry name" value="Cyt_b/b6_C"/>
</dbReference>
<dbReference type="InterPro" id="IPR036150">
    <property type="entry name" value="Cyt_b/b6_C_sf"/>
</dbReference>
<dbReference type="InterPro" id="IPR005797">
    <property type="entry name" value="Cyt_b/b6_N"/>
</dbReference>
<dbReference type="InterPro" id="IPR027387">
    <property type="entry name" value="Cytb/b6-like_sf"/>
</dbReference>
<dbReference type="InterPro" id="IPR030689">
    <property type="entry name" value="Cytochrome_b"/>
</dbReference>
<dbReference type="InterPro" id="IPR048260">
    <property type="entry name" value="Cytochrome_b_C_euk/bac"/>
</dbReference>
<dbReference type="InterPro" id="IPR048259">
    <property type="entry name" value="Cytochrome_b_N_euk/bac"/>
</dbReference>
<dbReference type="InterPro" id="IPR016174">
    <property type="entry name" value="Di-haem_cyt_TM"/>
</dbReference>
<dbReference type="PANTHER" id="PTHR19271">
    <property type="entry name" value="CYTOCHROME B"/>
    <property type="match status" value="1"/>
</dbReference>
<dbReference type="PANTHER" id="PTHR19271:SF16">
    <property type="entry name" value="CYTOCHROME B"/>
    <property type="match status" value="1"/>
</dbReference>
<dbReference type="Pfam" id="PF00032">
    <property type="entry name" value="Cytochrom_B_C"/>
    <property type="match status" value="1"/>
</dbReference>
<dbReference type="Pfam" id="PF00033">
    <property type="entry name" value="Cytochrome_B"/>
    <property type="match status" value="1"/>
</dbReference>
<dbReference type="PIRSF" id="PIRSF038885">
    <property type="entry name" value="COB"/>
    <property type="match status" value="1"/>
</dbReference>
<dbReference type="SUPFAM" id="SSF81648">
    <property type="entry name" value="a domain/subunit of cytochrome bc1 complex (Ubiquinol-cytochrome c reductase)"/>
    <property type="match status" value="1"/>
</dbReference>
<dbReference type="SUPFAM" id="SSF81342">
    <property type="entry name" value="Transmembrane di-heme cytochromes"/>
    <property type="match status" value="1"/>
</dbReference>
<dbReference type="PROSITE" id="PS51003">
    <property type="entry name" value="CYTB_CTER"/>
    <property type="match status" value="1"/>
</dbReference>
<dbReference type="PROSITE" id="PS51002">
    <property type="entry name" value="CYTB_NTER"/>
    <property type="match status" value="1"/>
</dbReference>
<keyword id="KW-0249">Electron transport</keyword>
<keyword id="KW-0349">Heme</keyword>
<keyword id="KW-0408">Iron</keyword>
<keyword id="KW-0472">Membrane</keyword>
<keyword id="KW-0479">Metal-binding</keyword>
<keyword id="KW-0496">Mitochondrion</keyword>
<keyword id="KW-0999">Mitochondrion inner membrane</keyword>
<keyword id="KW-0679">Respiratory chain</keyword>
<keyword id="KW-0812">Transmembrane</keyword>
<keyword id="KW-1133">Transmembrane helix</keyword>
<keyword id="KW-0813">Transport</keyword>
<keyword id="KW-0830">Ubiquinone</keyword>
<organism>
    <name type="scientific">Tragelaphus eurycerus</name>
    <name type="common">Bongo</name>
    <dbReference type="NCBI Taxonomy" id="69297"/>
    <lineage>
        <taxon>Eukaryota</taxon>
        <taxon>Metazoa</taxon>
        <taxon>Chordata</taxon>
        <taxon>Craniata</taxon>
        <taxon>Vertebrata</taxon>
        <taxon>Euteleostomi</taxon>
        <taxon>Mammalia</taxon>
        <taxon>Eutheria</taxon>
        <taxon>Laurasiatheria</taxon>
        <taxon>Artiodactyla</taxon>
        <taxon>Ruminantia</taxon>
        <taxon>Pecora</taxon>
        <taxon>Bovidae</taxon>
        <taxon>Bovinae</taxon>
        <taxon>Tragelaphus</taxon>
    </lineage>
</organism>
<proteinExistence type="inferred from homology"/>
<gene>
    <name type="primary">MT-CYB</name>
    <name type="synonym">COB</name>
    <name type="synonym">CYTB</name>
    <name type="synonym">MTCYB</name>
</gene>
<comment type="function">
    <text evidence="2">Component of the ubiquinol-cytochrome c reductase complex (complex III or cytochrome b-c1 complex) that is part of the mitochondrial respiratory chain. The b-c1 complex mediates electron transfer from ubiquinol to cytochrome c. Contributes to the generation of a proton gradient across the mitochondrial membrane that is then used for ATP synthesis.</text>
</comment>
<comment type="cofactor">
    <cofactor evidence="2">
        <name>heme b</name>
        <dbReference type="ChEBI" id="CHEBI:60344"/>
    </cofactor>
    <text evidence="2">Binds 2 heme b groups non-covalently.</text>
</comment>
<comment type="subunit">
    <text evidence="2">The cytochrome bc1 complex contains 11 subunits: 3 respiratory subunits (MT-CYB, CYC1 and UQCRFS1), 2 core proteins (UQCRC1 and UQCRC2) and 6 low-molecular weight proteins (UQCRH/QCR6, UQCRB/QCR7, UQCRQ/QCR8, UQCR10/QCR9, UQCR11/QCR10 and a cleavage product of UQCRFS1). This cytochrome bc1 complex then forms a dimer.</text>
</comment>
<comment type="subcellular location">
    <subcellularLocation>
        <location evidence="2">Mitochondrion inner membrane</location>
        <topology evidence="2">Multi-pass membrane protein</topology>
    </subcellularLocation>
</comment>
<comment type="miscellaneous">
    <text evidence="1">Heme 1 (or BL or b562) is low-potential and absorbs at about 562 nm, and heme 2 (or BH or b566) is high-potential and absorbs at about 566 nm.</text>
</comment>
<comment type="similarity">
    <text evidence="3 4">Belongs to the cytochrome b family.</text>
</comment>
<comment type="caution">
    <text evidence="2">The full-length protein contains only eight transmembrane helices, not nine as predicted by bioinformatics tools.</text>
</comment>
<sequence>MINIRKSHPLMKIVNNAFIDLPAPSNISSWWNFGSLLGICLILQILTGLFLAMHYTSDTTTAFSSVTHICRDVNYGWIIRYMHANGASMFFICLYMHVGRGMYYGSYTFLETWNIGVILLFTVMATAFMGYVLPWGQMSFWGATVITNLLSAIPYIGTSLVEWIWGGFSVDKATLTRFFAFHFILPFIITALAMVHLLFLHETGSNNPTGISSNMDKIPFHPYYTIKDILGALLLILTLMLLVLFAPDLLGDPDNYTPANPLNTPPHIKPEWYFLFAYAILRSIPNKLGGVLALVLSILILILMPLLHVSKQRSMMFRPLSQCLFWILAADLLTLTWIGGQPVEHPYIIIGQLASIMYFLIILVLMPVTSMIENNFLKR</sequence>
<accession>O20964</accession>
<protein>
    <recommendedName>
        <fullName>Cytochrome b</fullName>
    </recommendedName>
    <alternativeName>
        <fullName>Complex III subunit 3</fullName>
    </alternativeName>
    <alternativeName>
        <fullName>Complex III subunit III</fullName>
    </alternativeName>
    <alternativeName>
        <fullName>Cytochrome b-c1 complex subunit 3</fullName>
    </alternativeName>
    <alternativeName>
        <fullName>Ubiquinol-cytochrome-c reductase complex cytochrome b subunit</fullName>
    </alternativeName>
</protein>
<geneLocation type="mitochondrion"/>
<evidence type="ECO:0000250" key="1"/>
<evidence type="ECO:0000250" key="2">
    <source>
        <dbReference type="UniProtKB" id="P00157"/>
    </source>
</evidence>
<evidence type="ECO:0000255" key="3">
    <source>
        <dbReference type="PROSITE-ProRule" id="PRU00967"/>
    </source>
</evidence>
<evidence type="ECO:0000255" key="4">
    <source>
        <dbReference type="PROSITE-ProRule" id="PRU00968"/>
    </source>
</evidence>
<reference key="1">
    <citation type="journal article" date="1999" name="Mol. Phylogenet. Evol.">
        <title>Cytochrome b phylogeny of the family bovidae: resolution within the alcelaphini, antilopini, neotragini, and tragelaphini.</title>
        <authorList>
            <person name="Matthee C.A."/>
            <person name="Robinson T.J."/>
        </authorList>
    </citation>
    <scope>NUCLEOTIDE SEQUENCE [GENOMIC DNA]</scope>
</reference>
<reference key="2">
    <citation type="submission" date="1997-10" db="EMBL/GenBank/DDBJ databases">
        <authorList>
            <person name="Rebholz W.E.R."/>
            <person name="Harley E.H."/>
        </authorList>
    </citation>
    <scope>NUCLEOTIDE SEQUENCE [GENOMIC DNA] OF 17-116</scope>
</reference>
<name>CYB_TRAEU</name>
<feature type="chain" id="PRO_0000061675" description="Cytochrome b">
    <location>
        <begin position="1"/>
        <end position="379"/>
    </location>
</feature>
<feature type="transmembrane region" description="Helical" evidence="2">
    <location>
        <begin position="33"/>
        <end position="53"/>
    </location>
</feature>
<feature type="transmembrane region" description="Helical" evidence="2">
    <location>
        <begin position="77"/>
        <end position="98"/>
    </location>
</feature>
<feature type="transmembrane region" description="Helical" evidence="2">
    <location>
        <begin position="113"/>
        <end position="133"/>
    </location>
</feature>
<feature type="transmembrane region" description="Helical" evidence="2">
    <location>
        <begin position="178"/>
        <end position="198"/>
    </location>
</feature>
<feature type="transmembrane region" description="Helical" evidence="2">
    <location>
        <begin position="226"/>
        <end position="246"/>
    </location>
</feature>
<feature type="transmembrane region" description="Helical" evidence="2">
    <location>
        <begin position="288"/>
        <end position="308"/>
    </location>
</feature>
<feature type="transmembrane region" description="Helical" evidence="2">
    <location>
        <begin position="320"/>
        <end position="340"/>
    </location>
</feature>
<feature type="transmembrane region" description="Helical" evidence="2">
    <location>
        <begin position="347"/>
        <end position="367"/>
    </location>
</feature>
<feature type="binding site" description="axial binding residue" evidence="2">
    <location>
        <position position="83"/>
    </location>
    <ligand>
        <name>heme b</name>
        <dbReference type="ChEBI" id="CHEBI:60344"/>
        <label>b562</label>
    </ligand>
    <ligandPart>
        <name>Fe</name>
        <dbReference type="ChEBI" id="CHEBI:18248"/>
    </ligandPart>
</feature>
<feature type="binding site" description="axial binding residue" evidence="2">
    <location>
        <position position="97"/>
    </location>
    <ligand>
        <name>heme b</name>
        <dbReference type="ChEBI" id="CHEBI:60344"/>
        <label>b566</label>
    </ligand>
    <ligandPart>
        <name>Fe</name>
        <dbReference type="ChEBI" id="CHEBI:18248"/>
    </ligandPart>
</feature>
<feature type="binding site" description="axial binding residue" evidence="2">
    <location>
        <position position="182"/>
    </location>
    <ligand>
        <name>heme b</name>
        <dbReference type="ChEBI" id="CHEBI:60344"/>
        <label>b562</label>
    </ligand>
    <ligandPart>
        <name>Fe</name>
        <dbReference type="ChEBI" id="CHEBI:18248"/>
    </ligandPart>
</feature>
<feature type="binding site" description="axial binding residue" evidence="2">
    <location>
        <position position="196"/>
    </location>
    <ligand>
        <name>heme b</name>
        <dbReference type="ChEBI" id="CHEBI:60344"/>
        <label>b566</label>
    </ligand>
    <ligandPart>
        <name>Fe</name>
        <dbReference type="ChEBI" id="CHEBI:18248"/>
    </ligandPart>
</feature>
<feature type="binding site" evidence="2">
    <location>
        <position position="201"/>
    </location>
    <ligand>
        <name>a ubiquinone</name>
        <dbReference type="ChEBI" id="CHEBI:16389"/>
    </ligand>
</feature>